<accession>Q65194</accession>
<comment type="function">
    <text evidence="3 4 5 10 11">Inner envelope protein involved, through its interaction with host dynein, in the intracellular microtubule-dependent transport of viral capsid toward viral factories (PubMed:11559815). Seems to induce caspase-3 activation and apoptosis (PubMed:15225638). Plays a role in virion morphogenesis by recruiting and transforming the host ER membranes into the precursors of the viral envelope (PubMed:15047843). Involved in virus attachment to the host cell (PubMed:8764090, PubMed:9568043).</text>
</comment>
<comment type="subunit">
    <text evidence="3 6">Interacts with the host light chain cytoplasmic dynein DYNLL1; this interaction is critical for intracellular microtubule-dependent virus transport toward viral factories.</text>
</comment>
<comment type="subcellular location">
    <subcellularLocation>
        <location evidence="14">Virion membrane</location>
        <topology evidence="13">Single-pass membrane protein</topology>
    </subcellularLocation>
    <subcellularLocation>
        <location evidence="3">Host cytoplasm</location>
        <location evidence="3">Host cytoskeleton</location>
    </subcellularLocation>
    <subcellularLocation>
        <location evidence="4">Host endoplasmic reticulum membrane</location>
    </subcellularLocation>
    <text evidence="3 7 9">Localizes to the viral factory at 16 hpi (PubMed:33429879). Host DYNLL1 and viral p54 interact at the microtubular organizing center (PubMed:11559815). Found in the inner envelope of the virus (PubMed:30185597).</text>
</comment>
<comment type="induction">
    <text evidence="8">Expressed in the late phase of the viral replicative cycle.</text>
</comment>
<comment type="similarity">
    <text evidence="13">Belongs to the asfivirus envelope protein p54 family.</text>
</comment>
<dbReference type="EMBL" id="U18466">
    <property type="protein sequence ID" value="AAA65354.1"/>
    <property type="molecule type" value="Genomic_DNA"/>
</dbReference>
<dbReference type="RefSeq" id="NP_042818.1">
    <property type="nucleotide sequence ID" value="NC_001659.2"/>
</dbReference>
<dbReference type="SMR" id="Q65194"/>
<dbReference type="ABCD" id="Q65194">
    <property type="antibodies" value="2 sequenced antibodies"/>
</dbReference>
<dbReference type="DNASU" id="1488889"/>
<dbReference type="GeneID" id="22220355"/>
<dbReference type="KEGG" id="vg:22220355"/>
<dbReference type="BRENDA" id="4.1.1.39">
    <property type="organism ID" value="3078"/>
</dbReference>
<dbReference type="Proteomes" id="UP000000624">
    <property type="component" value="Segment"/>
</dbReference>
<dbReference type="GO" id="GO:0043657">
    <property type="term" value="C:host cell"/>
    <property type="evidence" value="ECO:0007669"/>
    <property type="project" value="GOC"/>
</dbReference>
<dbReference type="GO" id="GO:0044167">
    <property type="term" value="C:host cell endoplasmic reticulum membrane"/>
    <property type="evidence" value="ECO:0007669"/>
    <property type="project" value="UniProtKB-SubCell"/>
</dbReference>
<dbReference type="GO" id="GO:0044163">
    <property type="term" value="C:host cytoskeleton"/>
    <property type="evidence" value="ECO:0007669"/>
    <property type="project" value="UniProtKB-SubCell"/>
</dbReference>
<dbReference type="GO" id="GO:0016020">
    <property type="term" value="C:membrane"/>
    <property type="evidence" value="ECO:0007669"/>
    <property type="project" value="UniProtKB-KW"/>
</dbReference>
<dbReference type="GO" id="GO:0019031">
    <property type="term" value="C:viral envelope"/>
    <property type="evidence" value="ECO:0007669"/>
    <property type="project" value="UniProtKB-KW"/>
</dbReference>
<dbReference type="GO" id="GO:0055036">
    <property type="term" value="C:virion membrane"/>
    <property type="evidence" value="ECO:0007669"/>
    <property type="project" value="UniProtKB-SubCell"/>
</dbReference>
<dbReference type="GO" id="GO:0039701">
    <property type="term" value="P:microtubule-dependent intracellular transport of viral material towards cell periphery"/>
    <property type="evidence" value="ECO:0007669"/>
    <property type="project" value="UniProtKB-KW"/>
</dbReference>
<dbReference type="GO" id="GO:0046718">
    <property type="term" value="P:symbiont entry into host cell"/>
    <property type="evidence" value="ECO:0007669"/>
    <property type="project" value="UniProtKB-KW"/>
</dbReference>
<dbReference type="GO" id="GO:0019062">
    <property type="term" value="P:virion attachment to host cell"/>
    <property type="evidence" value="ECO:0007669"/>
    <property type="project" value="UniProtKB-KW"/>
</dbReference>
<dbReference type="InterPro" id="IPR008385">
    <property type="entry name" value="ASFV_p54"/>
</dbReference>
<dbReference type="Pfam" id="PF05568">
    <property type="entry name" value="ASFV_J13L"/>
    <property type="match status" value="1"/>
</dbReference>
<keyword id="KW-0053">Apoptosis</keyword>
<keyword id="KW-1035">Host cytoplasm</keyword>
<keyword id="KW-1037">Host cytoskeleton</keyword>
<keyword id="KW-1038">Host endoplasmic reticulum</keyword>
<keyword id="KW-1043">Host membrane</keyword>
<keyword id="KW-0945">Host-virus interaction</keyword>
<keyword id="KW-0426">Late protein</keyword>
<keyword id="KW-0472">Membrane</keyword>
<keyword id="KW-1189">Microtubular outwards viral transport</keyword>
<keyword id="KW-1185">Reference proteome</keyword>
<keyword id="KW-0812">Transmembrane</keyword>
<keyword id="KW-1133">Transmembrane helix</keyword>
<keyword id="KW-1161">Viral attachment to host cell</keyword>
<keyword id="KW-0261">Viral envelope protein</keyword>
<keyword id="KW-1188">Viral release from host cell</keyword>
<keyword id="KW-0946">Virion</keyword>
<keyword id="KW-1160">Virus entry into host cell</keyword>
<name>P54_ASFB7</name>
<protein>
    <recommendedName>
        <fullName evidence="13">Inner membrane protein p54</fullName>
    </recommendedName>
    <alternativeName>
        <fullName evidence="12">pE183L</fullName>
    </alternativeName>
</protein>
<organism>
    <name type="scientific">African swine fever virus (strain Badajoz 1971 Vero-adapted)</name>
    <name type="common">Ba71V</name>
    <name type="synonym">ASFV</name>
    <dbReference type="NCBI Taxonomy" id="10498"/>
    <lineage>
        <taxon>Viruses</taxon>
        <taxon>Varidnaviria</taxon>
        <taxon>Bamfordvirae</taxon>
        <taxon>Nucleocytoviricota</taxon>
        <taxon>Pokkesviricetes</taxon>
        <taxon>Asfuvirales</taxon>
        <taxon>Asfarviridae</taxon>
        <taxon>Asfivirus</taxon>
        <taxon>African swine fever virus</taxon>
    </lineage>
</organism>
<sequence>MDSEFFQPVYPRHYGECLSPVTPPSFFSTHMYTILIAIVVLVIIIIVLIYLFSSRKKKAAAAIEEEDIQFINPYQDQQWAEVTPQPGTSKPAGATTASAGKPVTGRPATNRPATNKPVTDNPVTDRLVMATGGPAAAPAAASAHPTEPYTTVTTQNTASQTMSAIENLRQRNTYTHKDLENSL</sequence>
<reference key="1">
    <citation type="journal article" date="1995" name="Virology">
        <title>Analysis of the complete nucleotide sequence of African swine fever virus.</title>
        <authorList>
            <person name="Yanez R.J."/>
            <person name="Rodriguez J.M."/>
            <person name="Nogal M.L."/>
            <person name="Yuste L."/>
            <person name="Enriquez C."/>
            <person name="Rodriguez J.F."/>
            <person name="Vinuela E."/>
        </authorList>
    </citation>
    <scope>NUCLEOTIDE SEQUENCE [LARGE SCALE GENOMIC DNA]</scope>
</reference>
<reference key="2">
    <citation type="journal article" date="1994" name="J. Virol.">
        <title>Characterization and molecular basis of heterogeneity of the African swine fever virus envelope protein p54.</title>
        <authorList>
            <person name="Rodriguez F."/>
            <person name="Alcaraz C."/>
            <person name="Eiras A."/>
            <person name="Yanez R.J."/>
            <person name="Rodriguez J.M."/>
            <person name="Alonso C."/>
            <person name="Rodriguez J.F."/>
            <person name="Escribano J.M."/>
        </authorList>
    </citation>
    <scope>CHARACTERIZATION</scope>
</reference>
<reference key="3">
    <citation type="journal article" date="1996" name="J. Virol.">
        <title>Neutralizing antibodies to different proteins of African swine fever virus inhibit both virus attachment and internalization.</title>
        <authorList>
            <person name="Gomez-Puertas P."/>
            <person name="Rodriguez F."/>
            <person name="Oviedo J.M."/>
            <person name="Ramiro-Ibanez F."/>
            <person name="Ruiz-Gonzalvo F."/>
            <person name="Alonso C."/>
            <person name="Escribano J.M."/>
        </authorList>
    </citation>
    <scope>FUNCTION</scope>
</reference>
<reference key="4">
    <citation type="journal article" date="1998" name="Virology">
        <title>The African swine fever virus proteins p54 and p30 are involved in two distinct steps of virus attachment and both contribute to the antibody-mediated protective immune response.</title>
        <authorList>
            <person name="Gomez-Puertas P."/>
            <person name="Rodriguez F."/>
            <person name="Oviedo J.M."/>
            <person name="Brun A."/>
            <person name="Alonso C."/>
            <person name="Escribano J.M."/>
        </authorList>
    </citation>
    <scope>FUNCTION</scope>
</reference>
<reference key="5">
    <citation type="journal article" date="2001" name="J. Virol.">
        <title>African swine fever virus protein p54 interacts with the microtubular motor complex through direct binding to light-chain dynein.</title>
        <authorList>
            <person name="Alonso C."/>
            <person name="Miskin J."/>
            <person name="Hernaez B."/>
            <person name="Fernandez-Zapatero P."/>
            <person name="Soto L."/>
            <person name="Canto C."/>
            <person name="Rodriguez-Crespo I."/>
            <person name="Dixon L."/>
            <person name="Escribano J.M."/>
        </authorList>
    </citation>
    <scope>INTERACTION WITH HOST DYNLL1</scope>
    <scope>SUBCELLULAR LOCATION</scope>
    <scope>FUNCTION</scope>
</reference>
<reference key="6">
    <citation type="journal article" date="2004" name="J. Virol.">
        <title>African swine fever virus structural protein p54 is essential for the recruitment of envelope precursors to assembly sites.</title>
        <authorList>
            <person name="Rodriguez J.M."/>
            <person name="Garcia-Escudero R."/>
            <person name="Salas M.L."/>
            <person name="Andres G."/>
        </authorList>
    </citation>
    <scope>SUBCELLULAR LOCATION</scope>
    <scope>FUNCTION</scope>
</reference>
<reference key="7">
    <citation type="journal article" date="2004" name="FEBS Lett.">
        <title>The African swine fever virus dynein-binding protein p54 induces infected cell apoptosis.</title>
        <authorList>
            <person name="Hernaez B."/>
            <person name="Diaz-Gil G."/>
            <person name="Garcia-Gallo M."/>
            <person name="Ignacio Quetglas J."/>
            <person name="Rodriguez-Crespo I."/>
            <person name="Dixon L."/>
            <person name="Escribano J.M."/>
            <person name="Alonso C."/>
        </authorList>
    </citation>
    <scope>FUNCTION</scope>
</reference>
<reference key="8">
    <citation type="journal article" date="2010" name="J. Virol.">
        <title>Small peptide inhibitors disrupt a high-affinity interaction between cytoplasmic dynein and a viral cargo protein.</title>
        <authorList>
            <person name="Hernaez B."/>
            <person name="Tarrago T."/>
            <person name="Giralt E."/>
            <person name="Escribano J.M."/>
            <person name="Alonso C."/>
        </authorList>
    </citation>
    <scope>INTERACTION WITH HOST DYNLL1</scope>
</reference>
<reference key="9">
    <citation type="journal article" date="2018" name="J. Virol.">
        <title>A Proteomic Atlas of the African Swine Fever Virus Particle.</title>
        <authorList>
            <person name="Alejo A."/>
            <person name="Matamoros T."/>
            <person name="Guerra M."/>
            <person name="Andres G."/>
        </authorList>
    </citation>
    <scope>SUBCELLULAR LOCATION</scope>
</reference>
<reference key="10">
    <citation type="journal article" date="2020" name="J. Virol.">
        <title>The African Swine Fever Virus Transcriptome.</title>
        <authorList>
            <person name="Cackett G."/>
            <person name="Matelska D."/>
            <person name="Sykora M."/>
            <person name="Portugal R."/>
            <person name="Malecki M."/>
            <person name="Baehler J."/>
            <person name="Dixon L."/>
            <person name="Werner F."/>
        </authorList>
    </citation>
    <scope>INDUCTION</scope>
</reference>
<reference key="11">
    <citation type="journal article" date="2021" name="Viruses">
        <title>Unpicking the Secrets of African Swine Fever Viral Replication Sites.</title>
        <authorList>
            <person name="Aicher S.M."/>
            <person name="Monaghan P."/>
            <person name="Netherton C.L."/>
            <person name="Hawes P.C."/>
        </authorList>
    </citation>
    <scope>SUBCELLULAR LOCATION</scope>
</reference>
<organismHost>
    <name type="scientific">Ornithodoros</name>
    <name type="common">relapsing fever ticks</name>
    <dbReference type="NCBI Taxonomy" id="6937"/>
</organismHost>
<organismHost>
    <name type="scientific">Sus scrofa</name>
    <name type="common">Pig</name>
    <dbReference type="NCBI Taxonomy" id="9823"/>
</organismHost>
<feature type="chain" id="PRO_0000373415" description="Inner membrane protein p54">
    <location>
        <begin position="1"/>
        <end position="183"/>
    </location>
</feature>
<feature type="transmembrane region" description="Helical" evidence="1">
    <location>
        <begin position="32"/>
        <end position="52"/>
    </location>
</feature>
<feature type="region of interest" description="Disordered" evidence="2">
    <location>
        <begin position="81"/>
        <end position="157"/>
    </location>
</feature>
<feature type="region of interest" description="Interaction with host DYNLL1" evidence="3 6">
    <location>
        <begin position="149"/>
        <end position="161"/>
    </location>
</feature>
<feature type="compositionally biased region" description="Polar residues" evidence="2">
    <location>
        <begin position="111"/>
        <end position="122"/>
    </location>
</feature>
<feature type="compositionally biased region" description="Low complexity" evidence="2">
    <location>
        <begin position="130"/>
        <end position="143"/>
    </location>
</feature>
<proteinExistence type="evidence at protein level"/>
<gene>
    <name type="ordered locus">Ba71V-126</name>
    <name type="ORF">E183L</name>
</gene>
<evidence type="ECO:0000255" key="1"/>
<evidence type="ECO:0000256" key="2">
    <source>
        <dbReference type="SAM" id="MobiDB-lite"/>
    </source>
</evidence>
<evidence type="ECO:0000269" key="3">
    <source>
    </source>
</evidence>
<evidence type="ECO:0000269" key="4">
    <source>
    </source>
</evidence>
<evidence type="ECO:0000269" key="5">
    <source>
    </source>
</evidence>
<evidence type="ECO:0000269" key="6">
    <source>
    </source>
</evidence>
<evidence type="ECO:0000269" key="7">
    <source>
    </source>
</evidence>
<evidence type="ECO:0000269" key="8">
    <source>
    </source>
</evidence>
<evidence type="ECO:0000269" key="9">
    <source>
    </source>
</evidence>
<evidence type="ECO:0000269" key="10">
    <source>
    </source>
</evidence>
<evidence type="ECO:0000269" key="11">
    <source>
    </source>
</evidence>
<evidence type="ECO:0000303" key="12">
    <source>
    </source>
</evidence>
<evidence type="ECO:0000305" key="13"/>
<evidence type="ECO:0000305" key="14">
    <source>
    </source>
</evidence>